<sequence length="98" mass="10951">MSMVYFNIFMAFTVSFVGLLMYRSHLMSSLLCLEGMMLSLFVMMSMTILNNHFTLANMAPIILLVFAACEAALGLSLLVMVSNTYGTDYVQNLNLLQC</sequence>
<name>NU4LM_PHOHO</name>
<dbReference type="EC" id="7.1.1.2"/>
<dbReference type="EMBL" id="AM181019">
    <property type="protein sequence ID" value="CAJ56918.1"/>
    <property type="molecule type" value="Genomic_DNA"/>
</dbReference>
<dbReference type="RefSeq" id="YP_778729.1">
    <property type="nucleotide sequence ID" value="NC_008418.1"/>
</dbReference>
<dbReference type="SMR" id="Q08HI0"/>
<dbReference type="GeneID" id="4356137"/>
<dbReference type="CTD" id="4539"/>
<dbReference type="GO" id="GO:0005743">
    <property type="term" value="C:mitochondrial inner membrane"/>
    <property type="evidence" value="ECO:0000250"/>
    <property type="project" value="UniProtKB"/>
</dbReference>
<dbReference type="GO" id="GO:0045271">
    <property type="term" value="C:respiratory chain complex I"/>
    <property type="evidence" value="ECO:0000250"/>
    <property type="project" value="UniProtKB"/>
</dbReference>
<dbReference type="GO" id="GO:0008137">
    <property type="term" value="F:NADH dehydrogenase (ubiquinone) activity"/>
    <property type="evidence" value="ECO:0000250"/>
    <property type="project" value="UniProtKB"/>
</dbReference>
<dbReference type="GO" id="GO:0042773">
    <property type="term" value="P:ATP synthesis coupled electron transport"/>
    <property type="evidence" value="ECO:0007669"/>
    <property type="project" value="InterPro"/>
</dbReference>
<dbReference type="FunFam" id="1.10.287.3510:FF:000002">
    <property type="entry name" value="NADH-ubiquinone oxidoreductase chain 4L"/>
    <property type="match status" value="1"/>
</dbReference>
<dbReference type="Gene3D" id="1.10.287.3510">
    <property type="match status" value="1"/>
</dbReference>
<dbReference type="InterPro" id="IPR001133">
    <property type="entry name" value="NADH_UbQ_OxRdtase_chain4L/K"/>
</dbReference>
<dbReference type="InterPro" id="IPR039428">
    <property type="entry name" value="NUOK/Mnh_C1-like"/>
</dbReference>
<dbReference type="PANTHER" id="PTHR11434:SF0">
    <property type="entry name" value="NADH-UBIQUINONE OXIDOREDUCTASE CHAIN 4L"/>
    <property type="match status" value="1"/>
</dbReference>
<dbReference type="PANTHER" id="PTHR11434">
    <property type="entry name" value="NADH-UBIQUINONE OXIDOREDUCTASE SUBUNIT ND4L"/>
    <property type="match status" value="1"/>
</dbReference>
<dbReference type="Pfam" id="PF00420">
    <property type="entry name" value="Oxidored_q2"/>
    <property type="match status" value="1"/>
</dbReference>
<organism>
    <name type="scientific">Phocarctos hookeri</name>
    <name type="common">Hooker's sea lion</name>
    <name type="synonym">Arctocephalus hookeri</name>
    <dbReference type="NCBI Taxonomy" id="34888"/>
    <lineage>
        <taxon>Eukaryota</taxon>
        <taxon>Metazoa</taxon>
        <taxon>Chordata</taxon>
        <taxon>Craniata</taxon>
        <taxon>Vertebrata</taxon>
        <taxon>Euteleostomi</taxon>
        <taxon>Mammalia</taxon>
        <taxon>Eutheria</taxon>
        <taxon>Laurasiatheria</taxon>
        <taxon>Carnivora</taxon>
        <taxon>Caniformia</taxon>
        <taxon>Pinnipedia</taxon>
        <taxon>Otariidae</taxon>
        <taxon>Phocarctos</taxon>
    </lineage>
</organism>
<gene>
    <name type="primary">MT-ND4L</name>
    <name type="synonym">MTND4L</name>
    <name type="synonym">NADH4L</name>
    <name type="synonym">ND4L</name>
</gene>
<comment type="function">
    <text evidence="1">Core subunit of the mitochondrial membrane respiratory chain NADH dehydrogenase (Complex I) which catalyzes electron transfer from NADH through the respiratory chain, using ubiquinone as an electron acceptor. Part of the enzyme membrane arm which is embedded in the lipid bilayer and involved in proton translocation.</text>
</comment>
<comment type="catalytic activity">
    <reaction evidence="1">
        <text>a ubiquinone + NADH + 5 H(+)(in) = a ubiquinol + NAD(+) + 4 H(+)(out)</text>
        <dbReference type="Rhea" id="RHEA:29091"/>
        <dbReference type="Rhea" id="RHEA-COMP:9565"/>
        <dbReference type="Rhea" id="RHEA-COMP:9566"/>
        <dbReference type="ChEBI" id="CHEBI:15378"/>
        <dbReference type="ChEBI" id="CHEBI:16389"/>
        <dbReference type="ChEBI" id="CHEBI:17976"/>
        <dbReference type="ChEBI" id="CHEBI:57540"/>
        <dbReference type="ChEBI" id="CHEBI:57945"/>
        <dbReference type="EC" id="7.1.1.2"/>
    </reaction>
    <physiologicalReaction direction="left-to-right" evidence="1">
        <dbReference type="Rhea" id="RHEA:29092"/>
    </physiologicalReaction>
</comment>
<comment type="subunit">
    <text evidence="2">Core subunit of respiratory chain NADH dehydrogenase (Complex I) which is composed of 45 different subunits.</text>
</comment>
<comment type="subcellular location">
    <subcellularLocation>
        <location evidence="2">Mitochondrion inner membrane</location>
        <topology evidence="3">Multi-pass membrane protein</topology>
    </subcellularLocation>
</comment>
<comment type="similarity">
    <text evidence="4">Belongs to the complex I subunit 4L family.</text>
</comment>
<protein>
    <recommendedName>
        <fullName>NADH-ubiquinone oxidoreductase chain 4L</fullName>
        <ecNumber>7.1.1.2</ecNumber>
    </recommendedName>
    <alternativeName>
        <fullName>NADH dehydrogenase subunit 4L</fullName>
    </alternativeName>
</protein>
<geneLocation type="mitochondrion"/>
<evidence type="ECO:0000250" key="1">
    <source>
        <dbReference type="UniProtKB" id="P03901"/>
    </source>
</evidence>
<evidence type="ECO:0000250" key="2">
    <source>
        <dbReference type="UniProtKB" id="P03902"/>
    </source>
</evidence>
<evidence type="ECO:0000255" key="3"/>
<evidence type="ECO:0000305" key="4"/>
<accession>Q08HI0</accession>
<feature type="chain" id="PRO_0000275095" description="NADH-ubiquinone oxidoreductase chain 4L">
    <location>
        <begin position="1"/>
        <end position="98"/>
    </location>
</feature>
<feature type="transmembrane region" description="Helical" evidence="3">
    <location>
        <begin position="1"/>
        <end position="21"/>
    </location>
</feature>
<feature type="transmembrane region" description="Helical" evidence="3">
    <location>
        <begin position="29"/>
        <end position="49"/>
    </location>
</feature>
<feature type="transmembrane region" description="Helical" evidence="3">
    <location>
        <begin position="61"/>
        <end position="81"/>
    </location>
</feature>
<proteinExistence type="inferred from homology"/>
<reference key="1">
    <citation type="journal article" date="2006" name="Mol. Phylogenet. Evol.">
        <title>Pinniped phylogeny and a new hypothesis for their origin and dispersal.</title>
        <authorList>
            <person name="Arnason U."/>
            <person name="Gullberg A."/>
            <person name="Janke A."/>
            <person name="Kullberg M."/>
            <person name="Lehman N."/>
            <person name="Petrov E.A."/>
            <person name="Vainola R."/>
        </authorList>
    </citation>
    <scope>NUCLEOTIDE SEQUENCE [GENOMIC DNA]</scope>
</reference>
<keyword id="KW-0249">Electron transport</keyword>
<keyword id="KW-0472">Membrane</keyword>
<keyword id="KW-0496">Mitochondrion</keyword>
<keyword id="KW-0999">Mitochondrion inner membrane</keyword>
<keyword id="KW-0520">NAD</keyword>
<keyword id="KW-0679">Respiratory chain</keyword>
<keyword id="KW-1278">Translocase</keyword>
<keyword id="KW-0812">Transmembrane</keyword>
<keyword id="KW-1133">Transmembrane helix</keyword>
<keyword id="KW-0813">Transport</keyword>
<keyword id="KW-0830">Ubiquinone</keyword>